<organism>
    <name type="scientific">Sodalis glossinidius (strain morsitans)</name>
    <dbReference type="NCBI Taxonomy" id="343509"/>
    <lineage>
        <taxon>Bacteria</taxon>
        <taxon>Pseudomonadati</taxon>
        <taxon>Pseudomonadota</taxon>
        <taxon>Gammaproteobacteria</taxon>
        <taxon>Enterobacterales</taxon>
        <taxon>Bruguierivoracaceae</taxon>
        <taxon>Sodalis</taxon>
    </lineage>
</organism>
<accession>Q2NX28</accession>
<reference key="1">
    <citation type="journal article" date="2006" name="Genome Res.">
        <title>Massive genome erosion and functional adaptations provide insights into the symbiotic lifestyle of Sodalis glossinidius in the tsetse host.</title>
        <authorList>
            <person name="Toh H."/>
            <person name="Weiss B.L."/>
            <person name="Perkin S.A.H."/>
            <person name="Yamashita A."/>
            <person name="Oshima K."/>
            <person name="Hattori M."/>
            <person name="Aksoy S."/>
        </authorList>
    </citation>
    <scope>NUCLEOTIDE SEQUENCE [LARGE SCALE GENOMIC DNA]</scope>
    <source>
        <strain>morsitans</strain>
    </source>
</reference>
<feature type="chain" id="PRO_0000406765" description="Flagellar transcriptional regulator FlhC">
    <location>
        <begin position="1"/>
        <end position="196"/>
    </location>
</feature>
<feature type="binding site" evidence="1">
    <location>
        <position position="138"/>
    </location>
    <ligand>
        <name>Zn(2+)</name>
        <dbReference type="ChEBI" id="CHEBI:29105"/>
    </ligand>
</feature>
<feature type="binding site" evidence="1">
    <location>
        <position position="141"/>
    </location>
    <ligand>
        <name>Zn(2+)</name>
        <dbReference type="ChEBI" id="CHEBI:29105"/>
    </ligand>
</feature>
<feature type="binding site" evidence="1">
    <location>
        <position position="158"/>
    </location>
    <ligand>
        <name>Zn(2+)</name>
        <dbReference type="ChEBI" id="CHEBI:29105"/>
    </ligand>
</feature>
<feature type="binding site" evidence="1">
    <location>
        <position position="161"/>
    </location>
    <ligand>
        <name>Zn(2+)</name>
        <dbReference type="ChEBI" id="CHEBI:29105"/>
    </ligand>
</feature>
<dbReference type="EMBL" id="AP008232">
    <property type="protein sequence ID" value="BAE73297.1"/>
    <property type="molecule type" value="Genomic_DNA"/>
</dbReference>
<dbReference type="RefSeq" id="WP_011409887.1">
    <property type="nucleotide sequence ID" value="NC_007712.1"/>
</dbReference>
<dbReference type="SMR" id="Q2NX28"/>
<dbReference type="STRING" id="343509.SG0022"/>
<dbReference type="KEGG" id="sgl:SG0022"/>
<dbReference type="eggNOG" id="ENOG502Z927">
    <property type="taxonomic scope" value="Bacteria"/>
</dbReference>
<dbReference type="HOGENOM" id="CLU_122824_0_0_6"/>
<dbReference type="OrthoDB" id="5570801at2"/>
<dbReference type="Proteomes" id="UP000001932">
    <property type="component" value="Chromosome"/>
</dbReference>
<dbReference type="GO" id="GO:0005737">
    <property type="term" value="C:cytoplasm"/>
    <property type="evidence" value="ECO:0007669"/>
    <property type="project" value="UniProtKB-SubCell"/>
</dbReference>
<dbReference type="GO" id="GO:0003677">
    <property type="term" value="F:DNA binding"/>
    <property type="evidence" value="ECO:0007669"/>
    <property type="project" value="UniProtKB-UniRule"/>
</dbReference>
<dbReference type="GO" id="GO:0008270">
    <property type="term" value="F:zinc ion binding"/>
    <property type="evidence" value="ECO:0007669"/>
    <property type="project" value="UniProtKB-UniRule"/>
</dbReference>
<dbReference type="GO" id="GO:0044781">
    <property type="term" value="P:bacterial-type flagellum organization"/>
    <property type="evidence" value="ECO:0007669"/>
    <property type="project" value="UniProtKB-KW"/>
</dbReference>
<dbReference type="GO" id="GO:0045893">
    <property type="term" value="P:positive regulation of DNA-templated transcription"/>
    <property type="evidence" value="ECO:0007669"/>
    <property type="project" value="InterPro"/>
</dbReference>
<dbReference type="GO" id="GO:1902208">
    <property type="term" value="P:regulation of bacterial-type flagellum assembly"/>
    <property type="evidence" value="ECO:0007669"/>
    <property type="project" value="UniProtKB-UniRule"/>
</dbReference>
<dbReference type="HAMAP" id="MF_01891">
    <property type="entry name" value="FhlC"/>
    <property type="match status" value="1"/>
</dbReference>
<dbReference type="InterPro" id="IPR007944">
    <property type="entry name" value="FlhC"/>
</dbReference>
<dbReference type="NCBIfam" id="NF009365">
    <property type="entry name" value="PRK12722.1"/>
    <property type="match status" value="1"/>
</dbReference>
<dbReference type="Pfam" id="PF05280">
    <property type="entry name" value="FlhC"/>
    <property type="match status" value="1"/>
</dbReference>
<dbReference type="PIRSF" id="PIRSF003159">
    <property type="entry name" value="FlhC"/>
    <property type="match status" value="1"/>
</dbReference>
<dbReference type="SUPFAM" id="SSF160930">
    <property type="entry name" value="FlhC-like"/>
    <property type="match status" value="1"/>
</dbReference>
<comment type="function">
    <text evidence="1">Functions in complex with FlhD as a master transcriptional regulator that regulates transcription of several flagellar and non-flagellar operons by binding to their promoter region. Activates expression of class 2 flagellar genes, including fliA, which is a flagellum-specific sigma factor that turns on the class 3 genes. Also regulates genes whose products function in a variety of physiological pathways.</text>
</comment>
<comment type="cofactor">
    <cofactor evidence="1">
        <name>Zn(2+)</name>
        <dbReference type="ChEBI" id="CHEBI:29105"/>
    </cofactor>
    <text evidence="1">Binds 1 zinc ion per subunit.</text>
</comment>
<comment type="subunit">
    <text evidence="1">Heterohexamer composed of two FlhC and four FlhD subunits. Each FlhC binds a FlhD dimer, forming a heterotrimer, and a hexamer assembles by dimerization of two heterotrimers.</text>
</comment>
<comment type="subcellular location">
    <subcellularLocation>
        <location evidence="1">Cytoplasm</location>
    </subcellularLocation>
</comment>
<comment type="similarity">
    <text evidence="1">Belongs to the FlhC family.</text>
</comment>
<keyword id="KW-0010">Activator</keyword>
<keyword id="KW-1005">Bacterial flagellum biogenesis</keyword>
<keyword id="KW-0963">Cytoplasm</keyword>
<keyword id="KW-0238">DNA-binding</keyword>
<keyword id="KW-0479">Metal-binding</keyword>
<keyword id="KW-0804">Transcription</keyword>
<keyword id="KW-0805">Transcription regulation</keyword>
<keyword id="KW-0862">Zinc</keyword>
<sequence>MYRKSIMQESRDIQLAMELIALGARLPILENETCLSRSRLLRLYKEVKGTPAPKGLLPFSADWFLSWEQNIHSSAFYNAYLCLIRVGNIPTIEAMIKAYRLYLELCPQRQDGGPLLGLTRAWILLRFIDSQLLGQTRCKLCGGAFITYAFHPPHNFVCSFCHPPSRAVKKRKLSHAAADNRIYNLRQRNMCNVKPC</sequence>
<protein>
    <recommendedName>
        <fullName evidence="1">Flagellar transcriptional regulator FlhC</fullName>
    </recommendedName>
</protein>
<proteinExistence type="inferred from homology"/>
<name>FLHC_SODGM</name>
<gene>
    <name evidence="1" type="primary">flhC</name>
    <name type="ordered locus">SG0022</name>
</gene>
<evidence type="ECO:0000255" key="1">
    <source>
        <dbReference type="HAMAP-Rule" id="MF_01891"/>
    </source>
</evidence>